<organism>
    <name type="scientific">Photobacterium profundum (strain SS9)</name>
    <dbReference type="NCBI Taxonomy" id="298386"/>
    <lineage>
        <taxon>Bacteria</taxon>
        <taxon>Pseudomonadati</taxon>
        <taxon>Pseudomonadota</taxon>
        <taxon>Gammaproteobacteria</taxon>
        <taxon>Vibrionales</taxon>
        <taxon>Vibrionaceae</taxon>
        <taxon>Photobacterium</taxon>
    </lineage>
</organism>
<feature type="chain" id="PRO_0000228695" description="Probable phosphatase PBPRB2022">
    <location>
        <begin position="1"/>
        <end position="246"/>
    </location>
</feature>
<feature type="binding site" evidence="1">
    <location>
        <position position="8"/>
    </location>
    <ligand>
        <name>Zn(2+)</name>
        <dbReference type="ChEBI" id="CHEBI:29105"/>
        <label>1</label>
    </ligand>
</feature>
<feature type="binding site" evidence="1">
    <location>
        <position position="10"/>
    </location>
    <ligand>
        <name>Zn(2+)</name>
        <dbReference type="ChEBI" id="CHEBI:29105"/>
        <label>1</label>
    </ligand>
</feature>
<feature type="binding site" evidence="1">
    <location>
        <position position="16"/>
    </location>
    <ligand>
        <name>Zn(2+)</name>
        <dbReference type="ChEBI" id="CHEBI:29105"/>
        <label>2</label>
    </ligand>
</feature>
<feature type="binding site" evidence="1">
    <location>
        <position position="41"/>
    </location>
    <ligand>
        <name>Zn(2+)</name>
        <dbReference type="ChEBI" id="CHEBI:29105"/>
        <label>2</label>
    </ligand>
</feature>
<feature type="binding site" evidence="1">
    <location>
        <position position="74"/>
    </location>
    <ligand>
        <name>Zn(2+)</name>
        <dbReference type="ChEBI" id="CHEBI:29105"/>
        <label>1</label>
    </ligand>
</feature>
<feature type="binding site" evidence="1">
    <location>
        <position position="74"/>
    </location>
    <ligand>
        <name>Zn(2+)</name>
        <dbReference type="ChEBI" id="CHEBI:29105"/>
        <label>3</label>
    </ligand>
</feature>
<feature type="binding site" evidence="1">
    <location>
        <position position="102"/>
    </location>
    <ligand>
        <name>Zn(2+)</name>
        <dbReference type="ChEBI" id="CHEBI:29105"/>
        <label>3</label>
    </ligand>
</feature>
<feature type="binding site" evidence="1">
    <location>
        <position position="132"/>
    </location>
    <ligand>
        <name>Zn(2+)</name>
        <dbReference type="ChEBI" id="CHEBI:29105"/>
        <label>3</label>
    </ligand>
</feature>
<feature type="binding site" evidence="1">
    <location>
        <position position="193"/>
    </location>
    <ligand>
        <name>Zn(2+)</name>
        <dbReference type="ChEBI" id="CHEBI:29105"/>
        <label>1</label>
    </ligand>
</feature>
<feature type="binding site" evidence="1">
    <location>
        <position position="195"/>
    </location>
    <ligand>
        <name>Zn(2+)</name>
        <dbReference type="ChEBI" id="CHEBI:29105"/>
        <label>2</label>
    </ligand>
</feature>
<dbReference type="EC" id="3.1.3.-" evidence="1"/>
<dbReference type="EMBL" id="CR378681">
    <property type="protein sequence ID" value="CAG23867.1"/>
    <property type="molecule type" value="Genomic_DNA"/>
</dbReference>
<dbReference type="RefSeq" id="WP_011222001.1">
    <property type="nucleotide sequence ID" value="NC_006371.1"/>
</dbReference>
<dbReference type="SMR" id="Q6LFR3"/>
<dbReference type="STRING" id="298386.PBPRB2022"/>
<dbReference type="KEGG" id="ppr:PBPRB2022"/>
<dbReference type="eggNOG" id="COG1387">
    <property type="taxonomic scope" value="Bacteria"/>
</dbReference>
<dbReference type="HOGENOM" id="CLU_061999_0_1_6"/>
<dbReference type="Proteomes" id="UP000000593">
    <property type="component" value="Chromosome 2"/>
</dbReference>
<dbReference type="GO" id="GO:0005829">
    <property type="term" value="C:cytosol"/>
    <property type="evidence" value="ECO:0007669"/>
    <property type="project" value="TreeGrafter"/>
</dbReference>
<dbReference type="GO" id="GO:0016791">
    <property type="term" value="F:phosphatase activity"/>
    <property type="evidence" value="ECO:0007669"/>
    <property type="project" value="UniProtKB-UniRule"/>
</dbReference>
<dbReference type="GO" id="GO:0008270">
    <property type="term" value="F:zinc ion binding"/>
    <property type="evidence" value="ECO:0007669"/>
    <property type="project" value="UniProtKB-UniRule"/>
</dbReference>
<dbReference type="GO" id="GO:0071978">
    <property type="term" value="P:bacterial-type flagellum-dependent swarming motility"/>
    <property type="evidence" value="ECO:0007669"/>
    <property type="project" value="TreeGrafter"/>
</dbReference>
<dbReference type="CDD" id="cd07437">
    <property type="entry name" value="PHP_HisPPase_Ycdx_like"/>
    <property type="match status" value="1"/>
</dbReference>
<dbReference type="Gene3D" id="3.20.20.140">
    <property type="entry name" value="Metal-dependent hydrolases"/>
    <property type="match status" value="1"/>
</dbReference>
<dbReference type="HAMAP" id="MF_01561">
    <property type="entry name" value="YcdX_phosphat"/>
    <property type="match status" value="1"/>
</dbReference>
<dbReference type="InterPro" id="IPR023710">
    <property type="entry name" value="Phosphatase_YcdX_put"/>
</dbReference>
<dbReference type="InterPro" id="IPR004013">
    <property type="entry name" value="PHP_dom"/>
</dbReference>
<dbReference type="InterPro" id="IPR050243">
    <property type="entry name" value="PHP_phosphatase"/>
</dbReference>
<dbReference type="InterPro" id="IPR003141">
    <property type="entry name" value="Pol/His_phosphatase_N"/>
</dbReference>
<dbReference type="InterPro" id="IPR016195">
    <property type="entry name" value="Pol/histidinol_Pase-like"/>
</dbReference>
<dbReference type="NCBIfam" id="NF006702">
    <property type="entry name" value="PRK09248.1"/>
    <property type="match status" value="1"/>
</dbReference>
<dbReference type="PANTHER" id="PTHR36928">
    <property type="entry name" value="PHOSPHATASE YCDX-RELATED"/>
    <property type="match status" value="1"/>
</dbReference>
<dbReference type="PANTHER" id="PTHR36928:SF1">
    <property type="entry name" value="PHOSPHATASE YCDX-RELATED"/>
    <property type="match status" value="1"/>
</dbReference>
<dbReference type="Pfam" id="PF02811">
    <property type="entry name" value="PHP"/>
    <property type="match status" value="1"/>
</dbReference>
<dbReference type="SMART" id="SM00481">
    <property type="entry name" value="POLIIIAc"/>
    <property type="match status" value="1"/>
</dbReference>
<dbReference type="SUPFAM" id="SSF89550">
    <property type="entry name" value="PHP domain-like"/>
    <property type="match status" value="1"/>
</dbReference>
<reference key="1">
    <citation type="journal article" date="2005" name="Science">
        <title>Life at depth: Photobacterium profundum genome sequence and expression analysis.</title>
        <authorList>
            <person name="Vezzi A."/>
            <person name="Campanaro S."/>
            <person name="D'Angelo M."/>
            <person name="Simonato F."/>
            <person name="Vitulo N."/>
            <person name="Lauro F.M."/>
            <person name="Cestaro A."/>
            <person name="Malacrida G."/>
            <person name="Simionati B."/>
            <person name="Cannata N."/>
            <person name="Romualdi C."/>
            <person name="Bartlett D.H."/>
            <person name="Valle G."/>
        </authorList>
    </citation>
    <scope>NUCLEOTIDE SEQUENCE [LARGE SCALE GENOMIC DNA]</scope>
    <source>
        <strain>ATCC BAA-1253 / SS9</strain>
    </source>
</reference>
<proteinExistence type="inferred from homology"/>
<name>Y6022_PHOPR</name>
<comment type="cofactor">
    <cofactor evidence="1">
        <name>Zn(2+)</name>
        <dbReference type="ChEBI" id="CHEBI:29105"/>
    </cofactor>
    <text evidence="1">Binds 3 Zn(2+) ions per subunit.</text>
</comment>
<comment type="similarity">
    <text evidence="1">Belongs to the PHP family.</text>
</comment>
<gene>
    <name type="ordered locus">PBPRB2022</name>
</gene>
<evidence type="ECO:0000255" key="1">
    <source>
        <dbReference type="HAMAP-Rule" id="MF_01561"/>
    </source>
</evidence>
<accession>Q6LFR3</accession>
<keyword id="KW-0378">Hydrolase</keyword>
<keyword id="KW-0479">Metal-binding</keyword>
<keyword id="KW-1185">Reference proteome</keyword>
<keyword id="KW-0862">Zinc</keyword>
<sequence>MQFLVDTHTHTISSGHAYSTVLENAAAASQRGLEMFCVTDHAPTMPGAPHFWHFANQRVIPRLLHGVAVLRGVEANILNIEGEIDLDERIINQLDWVMASFHEPVFRYTNKSDHTQALLNVIRSGRVDAIGHPGNPNYDFDFESVFKEAAKHNVVMEINNSSLSGSRVGSEIRCEDIAMYIKEIGGRITTGSDAHFAADVGNFESVEPLLKKVNFPIESIITRHSRSFLDFLEERGKKAISELAHL</sequence>
<protein>
    <recommendedName>
        <fullName evidence="1">Probable phosphatase PBPRB2022</fullName>
        <ecNumber evidence="1">3.1.3.-</ecNumber>
    </recommendedName>
</protein>